<comment type="function">
    <text evidence="1">Component of the heme-dependent oxidative N-demethylase (HODM) enzyme, that catalyzes the NADPH-dependent oxidation of dimethylamine (DMA) to methylamine (MA) and formaldehyde. Functions in bacterial methylated amine catabolism, linking alkylamine oxidation to the tetrahydrofolate C1 pool. The function of the delta subunit is unknown.</text>
</comment>
<comment type="subunit">
    <text evidence="1">The heme-dependent oxidative N-demethylase (HODM) is a heterotetramer composed of a catalytic alpha subunit, a FMN/2Fe-2S-dependent oxidoreductase beta subunit, a gamma subunit with putative aminotransferase activity, and a delta subunit of unknown function.</text>
</comment>
<dbReference type="EMBL" id="CP000680">
    <property type="protein sequence ID" value="ABP86203.1"/>
    <property type="molecule type" value="Genomic_DNA"/>
</dbReference>
<dbReference type="STRING" id="399739.Pmen_3453"/>
<dbReference type="KEGG" id="pmy:Pmen_3453"/>
<dbReference type="eggNOG" id="ENOG502Z8T2">
    <property type="taxonomic scope" value="Bacteria"/>
</dbReference>
<dbReference type="HOGENOM" id="CLU_117628_0_0_6"/>
<dbReference type="OrthoDB" id="6955242at2"/>
<dbReference type="InterPro" id="IPR048037">
    <property type="entry name" value="DmmA-like_C"/>
</dbReference>
<dbReference type="NCBIfam" id="NF041259">
    <property type="entry name" value="mono_DmmA_fam"/>
    <property type="match status" value="1"/>
</dbReference>
<dbReference type="Pfam" id="PF22289">
    <property type="entry name" value="DmmA-like_C"/>
    <property type="match status" value="1"/>
</dbReference>
<organism>
    <name type="scientific">Ectopseudomonas mendocina (strain ymp)</name>
    <name type="common">Pseudomonas mendocina</name>
    <dbReference type="NCBI Taxonomy" id="399739"/>
    <lineage>
        <taxon>Bacteria</taxon>
        <taxon>Pseudomonadati</taxon>
        <taxon>Pseudomonadota</taxon>
        <taxon>Gammaproteobacteria</taxon>
        <taxon>Pseudomonadales</taxon>
        <taxon>Pseudomonadaceae</taxon>
        <taxon>Ectopseudomonas</taxon>
    </lineage>
</organism>
<protein>
    <recommendedName>
        <fullName evidence="2">Heme-dependent oxidative N-demethylase delta subunit</fullName>
        <shortName evidence="2">HODM delta subunit</shortName>
    </recommendedName>
</protein>
<name>HODMD_ECTM1</name>
<feature type="chain" id="PRO_0000461800" description="Heme-dependent oxidative N-demethylase delta subunit">
    <location>
        <begin position="1"/>
        <end position="175"/>
    </location>
</feature>
<evidence type="ECO:0000269" key="1">
    <source>
    </source>
</evidence>
<evidence type="ECO:0000303" key="2">
    <source>
    </source>
</evidence>
<evidence type="ECO:0000312" key="3">
    <source>
        <dbReference type="EMBL" id="ABP86203.1"/>
    </source>
</evidence>
<proteinExistence type="evidence at protein level"/>
<gene>
    <name evidence="3" type="ordered locus">Pmen_3453</name>
</gene>
<reference key="1">
    <citation type="submission" date="2007-04" db="EMBL/GenBank/DDBJ databases">
        <title>Complete sequence of Pseudomonas mendocina ymp.</title>
        <authorList>
            <consortium name="US DOE Joint Genome Institute"/>
            <person name="Copeland A."/>
            <person name="Lucas S."/>
            <person name="Lapidus A."/>
            <person name="Barry K."/>
            <person name="Glavina del Rio T."/>
            <person name="Dalin E."/>
            <person name="Tice H."/>
            <person name="Pitluck S."/>
            <person name="Kiss H."/>
            <person name="Brettin T."/>
            <person name="Detter J.C."/>
            <person name="Bruce D."/>
            <person name="Han C."/>
            <person name="Schmutz J."/>
            <person name="Larimer F."/>
            <person name="Land M."/>
            <person name="Hauser L."/>
            <person name="Kyrpides N."/>
            <person name="Mikhailova N."/>
            <person name="Hersman L."/>
            <person name="Dubois J."/>
            <person name="Maurice P."/>
            <person name="Richardson P."/>
        </authorList>
    </citation>
    <scope>NUCLEOTIDE SEQUENCE [LARGE SCALE GENOMIC DNA]</scope>
    <source>
        <strain>ymp</strain>
    </source>
</reference>
<reference key="2">
    <citation type="journal article" date="2016" name="Nature">
        <title>An oxidative N-demethylase reveals PAS transition from ubiquitous sensor to enzyme.</title>
        <authorList>
            <person name="Ortmayer M."/>
            <person name="Lafite P."/>
            <person name="Menon B.R."/>
            <person name="Tralau T."/>
            <person name="Fisher K."/>
            <person name="Denkhaus L."/>
            <person name="Scrutton N.S."/>
            <person name="Rigby S.E."/>
            <person name="Munro A.W."/>
            <person name="Hay S."/>
            <person name="Leys D."/>
        </authorList>
    </citation>
    <scope>FUNCTION</scope>
    <scope>SUBUNIT</scope>
</reference>
<sequence>MSSAATNHPFSVPRYPSGQTCPAASEHLLVTQGAGQEERDALAAQLGKVRITHLALPDFPSVADLQLVLSTTLKDARVGLRLDLRGDEAFVWPLHALARAAGLLADEIFMSSSPEGTRLVFCVHCATCQPATSAGHLTCTQCGVMLEVRRHFSQRLGAYLGVCADADQPYQGVQP</sequence>
<accession>A4XXY7</accession>